<proteinExistence type="inferred from homology"/>
<evidence type="ECO:0000255" key="1">
    <source>
        <dbReference type="HAMAP-Rule" id="MF_01416"/>
    </source>
</evidence>
<gene>
    <name evidence="1" type="primary">atpH</name>
    <name type="ordered locus">Sputcn32_3959</name>
</gene>
<feature type="chain" id="PRO_0000371132" description="ATP synthase subunit delta">
    <location>
        <begin position="1"/>
        <end position="177"/>
    </location>
</feature>
<reference key="1">
    <citation type="submission" date="2007-04" db="EMBL/GenBank/DDBJ databases">
        <title>Complete sequence of Shewanella putrefaciens CN-32.</title>
        <authorList>
            <consortium name="US DOE Joint Genome Institute"/>
            <person name="Copeland A."/>
            <person name="Lucas S."/>
            <person name="Lapidus A."/>
            <person name="Barry K."/>
            <person name="Detter J.C."/>
            <person name="Glavina del Rio T."/>
            <person name="Hammon N."/>
            <person name="Israni S."/>
            <person name="Dalin E."/>
            <person name="Tice H."/>
            <person name="Pitluck S."/>
            <person name="Chain P."/>
            <person name="Malfatti S."/>
            <person name="Shin M."/>
            <person name="Vergez L."/>
            <person name="Schmutz J."/>
            <person name="Larimer F."/>
            <person name="Land M."/>
            <person name="Hauser L."/>
            <person name="Kyrpides N."/>
            <person name="Mikhailova N."/>
            <person name="Romine M.F."/>
            <person name="Fredrickson J."/>
            <person name="Tiedje J."/>
            <person name="Richardson P."/>
        </authorList>
    </citation>
    <scope>NUCLEOTIDE SEQUENCE [LARGE SCALE GENOMIC DNA]</scope>
    <source>
        <strain>CN-32 / ATCC BAA-453</strain>
    </source>
</reference>
<protein>
    <recommendedName>
        <fullName evidence="1">ATP synthase subunit delta</fullName>
    </recommendedName>
    <alternativeName>
        <fullName evidence="1">ATP synthase F(1) sector subunit delta</fullName>
    </alternativeName>
    <alternativeName>
        <fullName evidence="1">F-type ATPase subunit delta</fullName>
        <shortName evidence="1">F-ATPase subunit delta</shortName>
    </alternativeName>
</protein>
<organism>
    <name type="scientific">Shewanella putrefaciens (strain CN-32 / ATCC BAA-453)</name>
    <dbReference type="NCBI Taxonomy" id="319224"/>
    <lineage>
        <taxon>Bacteria</taxon>
        <taxon>Pseudomonadati</taxon>
        <taxon>Pseudomonadota</taxon>
        <taxon>Gammaproteobacteria</taxon>
        <taxon>Alteromonadales</taxon>
        <taxon>Shewanellaceae</taxon>
        <taxon>Shewanella</taxon>
    </lineage>
</organism>
<dbReference type="EMBL" id="CP000681">
    <property type="protein sequence ID" value="ABP77664.1"/>
    <property type="molecule type" value="Genomic_DNA"/>
</dbReference>
<dbReference type="SMR" id="A4YCI1"/>
<dbReference type="STRING" id="319224.Sputcn32_3959"/>
<dbReference type="KEGG" id="spc:Sputcn32_3959"/>
<dbReference type="eggNOG" id="COG0712">
    <property type="taxonomic scope" value="Bacteria"/>
</dbReference>
<dbReference type="HOGENOM" id="CLU_085114_3_0_6"/>
<dbReference type="GO" id="GO:0005886">
    <property type="term" value="C:plasma membrane"/>
    <property type="evidence" value="ECO:0007669"/>
    <property type="project" value="UniProtKB-SubCell"/>
</dbReference>
<dbReference type="GO" id="GO:0045259">
    <property type="term" value="C:proton-transporting ATP synthase complex"/>
    <property type="evidence" value="ECO:0007669"/>
    <property type="project" value="UniProtKB-KW"/>
</dbReference>
<dbReference type="GO" id="GO:0046933">
    <property type="term" value="F:proton-transporting ATP synthase activity, rotational mechanism"/>
    <property type="evidence" value="ECO:0007669"/>
    <property type="project" value="UniProtKB-UniRule"/>
</dbReference>
<dbReference type="Gene3D" id="1.10.520.20">
    <property type="entry name" value="N-terminal domain of the delta subunit of the F1F0-ATP synthase"/>
    <property type="match status" value="1"/>
</dbReference>
<dbReference type="HAMAP" id="MF_01416">
    <property type="entry name" value="ATP_synth_delta_bact"/>
    <property type="match status" value="1"/>
</dbReference>
<dbReference type="InterPro" id="IPR026015">
    <property type="entry name" value="ATP_synth_OSCP/delta_N_sf"/>
</dbReference>
<dbReference type="InterPro" id="IPR020781">
    <property type="entry name" value="ATPase_OSCP/d_CS"/>
</dbReference>
<dbReference type="InterPro" id="IPR000711">
    <property type="entry name" value="ATPase_OSCP/dsu"/>
</dbReference>
<dbReference type="NCBIfam" id="TIGR01145">
    <property type="entry name" value="ATP_synt_delta"/>
    <property type="match status" value="1"/>
</dbReference>
<dbReference type="NCBIfam" id="NF004402">
    <property type="entry name" value="PRK05758.2-2"/>
    <property type="match status" value="1"/>
</dbReference>
<dbReference type="NCBIfam" id="NF004404">
    <property type="entry name" value="PRK05758.2-5"/>
    <property type="match status" value="1"/>
</dbReference>
<dbReference type="PANTHER" id="PTHR11910">
    <property type="entry name" value="ATP SYNTHASE DELTA CHAIN"/>
    <property type="match status" value="1"/>
</dbReference>
<dbReference type="Pfam" id="PF00213">
    <property type="entry name" value="OSCP"/>
    <property type="match status" value="1"/>
</dbReference>
<dbReference type="PRINTS" id="PR00125">
    <property type="entry name" value="ATPASEDELTA"/>
</dbReference>
<dbReference type="SUPFAM" id="SSF47928">
    <property type="entry name" value="N-terminal domain of the delta subunit of the F1F0-ATP synthase"/>
    <property type="match status" value="1"/>
</dbReference>
<dbReference type="PROSITE" id="PS00389">
    <property type="entry name" value="ATPASE_DELTA"/>
    <property type="match status" value="1"/>
</dbReference>
<sequence length="177" mass="19287">MAELTTIARPYAKAAFDFAIEHNAVDNWAEMLTFAALVSENETMQPLLNGALANTKLAALFINVCGEQINKQGQNLIKVMAENGRLSVLPTVSKLFSDFRNEWAKEVEANVVSATELSLEQQQHISVSLEKRLARKVKLNCSTDTALIAGAIIQVGDLVIDGSVRGKLSRLSDTLQS</sequence>
<comment type="function">
    <text evidence="1">F(1)F(0) ATP synthase produces ATP from ADP in the presence of a proton or sodium gradient. F-type ATPases consist of two structural domains, F(1) containing the extramembraneous catalytic core and F(0) containing the membrane proton channel, linked together by a central stalk and a peripheral stalk. During catalysis, ATP synthesis in the catalytic domain of F(1) is coupled via a rotary mechanism of the central stalk subunits to proton translocation.</text>
</comment>
<comment type="function">
    <text evidence="1">This protein is part of the stalk that links CF(0) to CF(1). It either transmits conformational changes from CF(0) to CF(1) or is implicated in proton conduction.</text>
</comment>
<comment type="subunit">
    <text evidence="1">F-type ATPases have 2 components, F(1) - the catalytic core - and F(0) - the membrane proton channel. F(1) has five subunits: alpha(3), beta(3), gamma(1), delta(1), epsilon(1). F(0) has three main subunits: a(1), b(2) and c(10-14). The alpha and beta chains form an alternating ring which encloses part of the gamma chain. F(1) is attached to F(0) by a central stalk formed by the gamma and epsilon chains, while a peripheral stalk is formed by the delta and b chains.</text>
</comment>
<comment type="subcellular location">
    <subcellularLocation>
        <location evidence="1">Cell inner membrane</location>
        <topology evidence="1">Peripheral membrane protein</topology>
    </subcellularLocation>
</comment>
<comment type="similarity">
    <text evidence="1">Belongs to the ATPase delta chain family.</text>
</comment>
<keyword id="KW-0066">ATP synthesis</keyword>
<keyword id="KW-0997">Cell inner membrane</keyword>
<keyword id="KW-1003">Cell membrane</keyword>
<keyword id="KW-0139">CF(1)</keyword>
<keyword id="KW-0375">Hydrogen ion transport</keyword>
<keyword id="KW-0406">Ion transport</keyword>
<keyword id="KW-0472">Membrane</keyword>
<keyword id="KW-0813">Transport</keyword>
<accession>A4YCI1</accession>
<name>ATPD_SHEPC</name>